<organism>
    <name type="scientific">Janthinobacterium sp. (strain Marseille)</name>
    <name type="common">Minibacterium massiliensis</name>
    <dbReference type="NCBI Taxonomy" id="375286"/>
    <lineage>
        <taxon>Bacteria</taxon>
        <taxon>Pseudomonadati</taxon>
        <taxon>Pseudomonadota</taxon>
        <taxon>Betaproteobacteria</taxon>
        <taxon>Burkholderiales</taxon>
        <taxon>Oxalobacteraceae</taxon>
        <taxon>Janthinobacterium</taxon>
    </lineage>
</organism>
<gene>
    <name evidence="1" type="primary">gluQ</name>
    <name type="ordered locus">mma_0529</name>
</gene>
<protein>
    <recommendedName>
        <fullName evidence="1">Glutamyl-Q tRNA(Asp) synthetase</fullName>
        <shortName evidence="1">Glu-Q-RSs</shortName>
        <ecNumber evidence="1">6.1.1.-</ecNumber>
    </recommendedName>
</protein>
<dbReference type="EC" id="6.1.1.-" evidence="1"/>
<dbReference type="EMBL" id="CP000269">
    <property type="protein sequence ID" value="ABR88904.1"/>
    <property type="molecule type" value="Genomic_DNA"/>
</dbReference>
<dbReference type="RefSeq" id="WP_012078393.1">
    <property type="nucleotide sequence ID" value="NC_009659.1"/>
</dbReference>
<dbReference type="SMR" id="A6SVC2"/>
<dbReference type="STRING" id="375286.mma_0529"/>
<dbReference type="KEGG" id="mms:mma_0529"/>
<dbReference type="eggNOG" id="COG0008">
    <property type="taxonomic scope" value="Bacteria"/>
</dbReference>
<dbReference type="HOGENOM" id="CLU_015768_0_1_4"/>
<dbReference type="OrthoDB" id="9807503at2"/>
<dbReference type="Proteomes" id="UP000006388">
    <property type="component" value="Chromosome"/>
</dbReference>
<dbReference type="GO" id="GO:0005829">
    <property type="term" value="C:cytosol"/>
    <property type="evidence" value="ECO:0007669"/>
    <property type="project" value="TreeGrafter"/>
</dbReference>
<dbReference type="GO" id="GO:0005524">
    <property type="term" value="F:ATP binding"/>
    <property type="evidence" value="ECO:0007669"/>
    <property type="project" value="UniProtKB-KW"/>
</dbReference>
<dbReference type="GO" id="GO:0004818">
    <property type="term" value="F:glutamate-tRNA ligase activity"/>
    <property type="evidence" value="ECO:0007669"/>
    <property type="project" value="TreeGrafter"/>
</dbReference>
<dbReference type="GO" id="GO:0008270">
    <property type="term" value="F:zinc ion binding"/>
    <property type="evidence" value="ECO:0007669"/>
    <property type="project" value="UniProtKB-UniRule"/>
</dbReference>
<dbReference type="GO" id="GO:0006424">
    <property type="term" value="P:glutamyl-tRNA aminoacylation"/>
    <property type="evidence" value="ECO:0007669"/>
    <property type="project" value="InterPro"/>
</dbReference>
<dbReference type="GO" id="GO:0006400">
    <property type="term" value="P:tRNA modification"/>
    <property type="evidence" value="ECO:0007669"/>
    <property type="project" value="InterPro"/>
</dbReference>
<dbReference type="Gene3D" id="3.40.50.620">
    <property type="entry name" value="HUPs"/>
    <property type="match status" value="1"/>
</dbReference>
<dbReference type="HAMAP" id="MF_01428">
    <property type="entry name" value="Glu_Q_tRNA_synth"/>
    <property type="match status" value="1"/>
</dbReference>
<dbReference type="InterPro" id="IPR022380">
    <property type="entry name" value="Glu-Q_tRNA(Asp)_Synthase"/>
</dbReference>
<dbReference type="InterPro" id="IPR000924">
    <property type="entry name" value="Glu/Gln-tRNA-synth"/>
</dbReference>
<dbReference type="InterPro" id="IPR020058">
    <property type="entry name" value="Glu/Gln-tRNA-synth_Ib_cat-dom"/>
</dbReference>
<dbReference type="InterPro" id="IPR049940">
    <property type="entry name" value="GluQ/Sye"/>
</dbReference>
<dbReference type="InterPro" id="IPR014729">
    <property type="entry name" value="Rossmann-like_a/b/a_fold"/>
</dbReference>
<dbReference type="NCBIfam" id="NF004313">
    <property type="entry name" value="PRK05710.1-2"/>
    <property type="match status" value="1"/>
</dbReference>
<dbReference type="NCBIfam" id="NF004314">
    <property type="entry name" value="PRK05710.1-3"/>
    <property type="match status" value="1"/>
</dbReference>
<dbReference type="NCBIfam" id="TIGR03838">
    <property type="entry name" value="queuosine_YadB"/>
    <property type="match status" value="1"/>
</dbReference>
<dbReference type="PANTHER" id="PTHR43311">
    <property type="entry name" value="GLUTAMATE--TRNA LIGASE"/>
    <property type="match status" value="1"/>
</dbReference>
<dbReference type="PANTHER" id="PTHR43311:SF1">
    <property type="entry name" value="GLUTAMYL-Q TRNA(ASP) SYNTHETASE"/>
    <property type="match status" value="1"/>
</dbReference>
<dbReference type="Pfam" id="PF00749">
    <property type="entry name" value="tRNA-synt_1c"/>
    <property type="match status" value="1"/>
</dbReference>
<dbReference type="PRINTS" id="PR00987">
    <property type="entry name" value="TRNASYNTHGLU"/>
</dbReference>
<dbReference type="SUPFAM" id="SSF52374">
    <property type="entry name" value="Nucleotidylyl transferase"/>
    <property type="match status" value="1"/>
</dbReference>
<accession>A6SVC2</accession>
<keyword id="KW-0030">Aminoacyl-tRNA synthetase</keyword>
<keyword id="KW-0067">ATP-binding</keyword>
<keyword id="KW-0436">Ligase</keyword>
<keyword id="KW-0479">Metal-binding</keyword>
<keyword id="KW-0547">Nucleotide-binding</keyword>
<keyword id="KW-0862">Zinc</keyword>
<feature type="chain" id="PRO_1000024356" description="Glutamyl-Q tRNA(Asp) synthetase">
    <location>
        <begin position="1"/>
        <end position="293"/>
    </location>
</feature>
<feature type="short sequence motif" description="'HIGH' region">
    <location>
        <begin position="11"/>
        <end position="21"/>
    </location>
</feature>
<feature type="short sequence motif" description="'KMSKS' region">
    <location>
        <begin position="239"/>
        <end position="243"/>
    </location>
</feature>
<feature type="binding site" evidence="1">
    <location>
        <begin position="8"/>
        <end position="12"/>
    </location>
    <ligand>
        <name>L-glutamate</name>
        <dbReference type="ChEBI" id="CHEBI:29985"/>
    </ligand>
</feature>
<feature type="binding site" evidence="1">
    <location>
        <position position="44"/>
    </location>
    <ligand>
        <name>L-glutamate</name>
        <dbReference type="ChEBI" id="CHEBI:29985"/>
    </ligand>
</feature>
<feature type="binding site" evidence="1">
    <location>
        <position position="98"/>
    </location>
    <ligand>
        <name>Zn(2+)</name>
        <dbReference type="ChEBI" id="CHEBI:29105"/>
    </ligand>
</feature>
<feature type="binding site" evidence="1">
    <location>
        <position position="100"/>
    </location>
    <ligand>
        <name>Zn(2+)</name>
        <dbReference type="ChEBI" id="CHEBI:29105"/>
    </ligand>
</feature>
<feature type="binding site" evidence="1">
    <location>
        <position position="120"/>
    </location>
    <ligand>
        <name>Zn(2+)</name>
        <dbReference type="ChEBI" id="CHEBI:29105"/>
    </ligand>
</feature>
<feature type="binding site" evidence="1">
    <location>
        <position position="124"/>
    </location>
    <ligand>
        <name>Zn(2+)</name>
        <dbReference type="ChEBI" id="CHEBI:29105"/>
    </ligand>
</feature>
<feature type="binding site" evidence="1">
    <location>
        <position position="183"/>
    </location>
    <ligand>
        <name>L-glutamate</name>
        <dbReference type="ChEBI" id="CHEBI:29985"/>
    </ligand>
</feature>
<feature type="binding site" evidence="1">
    <location>
        <position position="201"/>
    </location>
    <ligand>
        <name>L-glutamate</name>
        <dbReference type="ChEBI" id="CHEBI:29985"/>
    </ligand>
</feature>
<feature type="binding site" evidence="1">
    <location>
        <position position="242"/>
    </location>
    <ligand>
        <name>ATP</name>
        <dbReference type="ChEBI" id="CHEBI:30616"/>
    </ligand>
</feature>
<proteinExistence type="inferred from homology"/>
<name>GLUQ_JANMA</name>
<reference key="1">
    <citation type="journal article" date="2007" name="PLoS Genet.">
        <title>Genome analysis of Minibacterium massiliensis highlights the convergent evolution of water-living bacteria.</title>
        <authorList>
            <person name="Audic S."/>
            <person name="Robert C."/>
            <person name="Campagna B."/>
            <person name="Parinello H."/>
            <person name="Claverie J.-M."/>
            <person name="Raoult D."/>
            <person name="Drancourt M."/>
        </authorList>
    </citation>
    <scope>NUCLEOTIDE SEQUENCE [LARGE SCALE GENOMIC DNA]</scope>
    <source>
        <strain>Marseille</strain>
    </source>
</reference>
<sequence>MTNKYIGRFAPSPSGPLHAGSLVAAMASYLDAKAHQGQWLVRIEDIDETRTVADATTAIMDALAVFGMQHDGEVVVQSQRKDLYQAAFERLKDLVYPCGCTRREIADSRLGVAADGAAIYPGTCRHGLAAGKTARTWRVRVPDANENNEAINFDDRWLGPLTQHLASEVGDFVLKRADGFWAYQLAVVVDDADQEVTHIVRGTDLLESTGRQIYLQRMLGFPTPHYMHVPVVLNDVGEKLSKQTGALALDLAHPMDELMKAARFLELSLPPVNSITEFWRVAIAAWARRFAQE</sequence>
<evidence type="ECO:0000255" key="1">
    <source>
        <dbReference type="HAMAP-Rule" id="MF_01428"/>
    </source>
</evidence>
<comment type="function">
    <text evidence="1">Catalyzes the tRNA-independent activation of glutamate in presence of ATP and the subsequent transfer of glutamate onto a tRNA(Asp). Glutamate is transferred on the 2-amino-5-(4,5-dihydroxy-2-cyclopenten-1-yl) moiety of the queuosine in the wobble position of the QUC anticodon.</text>
</comment>
<comment type="cofactor">
    <cofactor evidence="1">
        <name>Zn(2+)</name>
        <dbReference type="ChEBI" id="CHEBI:29105"/>
    </cofactor>
    <text evidence="1">Binds 1 zinc ion per subunit.</text>
</comment>
<comment type="similarity">
    <text evidence="1">Belongs to the class-I aminoacyl-tRNA synthetase family. GluQ subfamily.</text>
</comment>